<accession>B7L9G0</accession>
<proteinExistence type="inferred from homology"/>
<keyword id="KW-0067">ATP-binding</keyword>
<keyword id="KW-1015">Disulfide bond</keyword>
<keyword id="KW-0418">Kinase</keyword>
<keyword id="KW-0460">Magnesium</keyword>
<keyword id="KW-0547">Nucleotide-binding</keyword>
<keyword id="KW-1185">Reference proteome</keyword>
<keyword id="KW-0684">Rhamnose metabolism</keyword>
<keyword id="KW-0808">Transferase</keyword>
<dbReference type="EC" id="2.7.1.5" evidence="1"/>
<dbReference type="EMBL" id="CU928145">
    <property type="protein sequence ID" value="CAV01089.1"/>
    <property type="molecule type" value="Genomic_DNA"/>
</dbReference>
<dbReference type="RefSeq" id="WP_000144118.1">
    <property type="nucleotide sequence ID" value="NC_011748.1"/>
</dbReference>
<dbReference type="SMR" id="B7L9G0"/>
<dbReference type="KEGG" id="eck:EC55989_4382"/>
<dbReference type="HOGENOM" id="CLU_039395_0_0_6"/>
<dbReference type="UniPathway" id="UPA00541">
    <property type="reaction ID" value="UER00602"/>
</dbReference>
<dbReference type="Proteomes" id="UP000000746">
    <property type="component" value="Chromosome"/>
</dbReference>
<dbReference type="GO" id="GO:0005829">
    <property type="term" value="C:cytosol"/>
    <property type="evidence" value="ECO:0007669"/>
    <property type="project" value="TreeGrafter"/>
</dbReference>
<dbReference type="GO" id="GO:0005524">
    <property type="term" value="F:ATP binding"/>
    <property type="evidence" value="ECO:0007669"/>
    <property type="project" value="UniProtKB-KW"/>
</dbReference>
<dbReference type="GO" id="GO:0004370">
    <property type="term" value="F:glycerol kinase activity"/>
    <property type="evidence" value="ECO:0007669"/>
    <property type="project" value="TreeGrafter"/>
</dbReference>
<dbReference type="GO" id="GO:0008993">
    <property type="term" value="F:rhamnulokinase activity"/>
    <property type="evidence" value="ECO:0007669"/>
    <property type="project" value="UniProtKB-UniRule"/>
</dbReference>
<dbReference type="GO" id="GO:0006071">
    <property type="term" value="P:glycerol metabolic process"/>
    <property type="evidence" value="ECO:0007669"/>
    <property type="project" value="TreeGrafter"/>
</dbReference>
<dbReference type="GO" id="GO:0019301">
    <property type="term" value="P:rhamnose catabolic process"/>
    <property type="evidence" value="ECO:0007669"/>
    <property type="project" value="UniProtKB-UniRule"/>
</dbReference>
<dbReference type="CDD" id="cd07771">
    <property type="entry name" value="ASKHA_NBD_FGGY_RhaB-like"/>
    <property type="match status" value="1"/>
</dbReference>
<dbReference type="FunFam" id="3.30.420.40:FF:000064">
    <property type="entry name" value="Rhamnulokinase"/>
    <property type="match status" value="1"/>
</dbReference>
<dbReference type="FunFam" id="3.30.420.40:FF:000073">
    <property type="entry name" value="Rhamnulokinase"/>
    <property type="match status" value="1"/>
</dbReference>
<dbReference type="Gene3D" id="3.30.420.40">
    <property type="match status" value="2"/>
</dbReference>
<dbReference type="HAMAP" id="MF_01535">
    <property type="entry name" value="Rhamnulokinase"/>
    <property type="match status" value="1"/>
</dbReference>
<dbReference type="InterPro" id="IPR043129">
    <property type="entry name" value="ATPase_NBD"/>
</dbReference>
<dbReference type="InterPro" id="IPR018485">
    <property type="entry name" value="FGGY_C"/>
</dbReference>
<dbReference type="InterPro" id="IPR018484">
    <property type="entry name" value="FGGY_N"/>
</dbReference>
<dbReference type="InterPro" id="IPR013449">
    <property type="entry name" value="Rhamnulokinase"/>
</dbReference>
<dbReference type="NCBIfam" id="NF007925">
    <property type="entry name" value="PRK10640.1"/>
    <property type="match status" value="1"/>
</dbReference>
<dbReference type="NCBIfam" id="TIGR02627">
    <property type="entry name" value="rhamnulo_kin"/>
    <property type="match status" value="1"/>
</dbReference>
<dbReference type="PANTHER" id="PTHR10196:SF93">
    <property type="entry name" value="L-RHAMNULOKINASE"/>
    <property type="match status" value="1"/>
</dbReference>
<dbReference type="PANTHER" id="PTHR10196">
    <property type="entry name" value="SUGAR KINASE"/>
    <property type="match status" value="1"/>
</dbReference>
<dbReference type="Pfam" id="PF02782">
    <property type="entry name" value="FGGY_C"/>
    <property type="match status" value="1"/>
</dbReference>
<dbReference type="Pfam" id="PF00370">
    <property type="entry name" value="FGGY_N"/>
    <property type="match status" value="1"/>
</dbReference>
<dbReference type="SUPFAM" id="SSF53067">
    <property type="entry name" value="Actin-like ATPase domain"/>
    <property type="match status" value="2"/>
</dbReference>
<sequence length="489" mass="54049">MTFRNCVAVDLGASSGRVMLARYQRECRSLTLREIHRFKNGLHSQNGYVTWNVDSLESAIRLGLNKVCEEGIRIDSIGIDTWGVDFVLLDQQGQRVGLPVAYRDSRSNGLMAQAQQQLGKRDIYQRSGIQFLPFNTLYQLRALTEQQPELIPHIAHALLMPDYFSYRLTGKMNWEYTNATTTQLVNINSDDWDESLLAWSGANKAWFGRPTHPGNVIGHWICPQGNEIPVVAVASHDTASAVIASPLNGSRAAYLSSGTWSLMGFESQTPFTNDTALAANITNEGGAEGRYRVLKNIMGLWLLQRVLQERQINDLPALIAATQALPACRFIINPNDDRFINPEAMCSEIQAACRETAQPIPESDAELARCIFDSLALLYADVLHELAQLRGEDFSQLHIVGGGCQNTLLNQLCADACGIRVIAGPVEASTLGNIGIQLMTLDELNNVDDFRQVVSTTANLTTFTPNPDSEIAHYVAQIHSTRQTKELCA</sequence>
<protein>
    <recommendedName>
        <fullName evidence="1">Rhamnulokinase</fullName>
        <shortName evidence="1">RhaB</shortName>
        <ecNumber evidence="1">2.7.1.5</ecNumber>
    </recommendedName>
    <alternativeName>
        <fullName evidence="1">ATP:L-rhamnulose phosphotransferase</fullName>
    </alternativeName>
    <alternativeName>
        <fullName evidence="1">L-rhamnulose 1-kinase</fullName>
    </alternativeName>
    <alternativeName>
        <fullName evidence="1">Rhamnulose kinase</fullName>
    </alternativeName>
</protein>
<name>RHAB_ECO55</name>
<reference key="1">
    <citation type="journal article" date="2009" name="PLoS Genet.">
        <title>Organised genome dynamics in the Escherichia coli species results in highly diverse adaptive paths.</title>
        <authorList>
            <person name="Touchon M."/>
            <person name="Hoede C."/>
            <person name="Tenaillon O."/>
            <person name="Barbe V."/>
            <person name="Baeriswyl S."/>
            <person name="Bidet P."/>
            <person name="Bingen E."/>
            <person name="Bonacorsi S."/>
            <person name="Bouchier C."/>
            <person name="Bouvet O."/>
            <person name="Calteau A."/>
            <person name="Chiapello H."/>
            <person name="Clermont O."/>
            <person name="Cruveiller S."/>
            <person name="Danchin A."/>
            <person name="Diard M."/>
            <person name="Dossat C."/>
            <person name="Karoui M.E."/>
            <person name="Frapy E."/>
            <person name="Garry L."/>
            <person name="Ghigo J.M."/>
            <person name="Gilles A.M."/>
            <person name="Johnson J."/>
            <person name="Le Bouguenec C."/>
            <person name="Lescat M."/>
            <person name="Mangenot S."/>
            <person name="Martinez-Jehanne V."/>
            <person name="Matic I."/>
            <person name="Nassif X."/>
            <person name="Oztas S."/>
            <person name="Petit M.A."/>
            <person name="Pichon C."/>
            <person name="Rouy Z."/>
            <person name="Ruf C.S."/>
            <person name="Schneider D."/>
            <person name="Tourret J."/>
            <person name="Vacherie B."/>
            <person name="Vallenet D."/>
            <person name="Medigue C."/>
            <person name="Rocha E.P.C."/>
            <person name="Denamur E."/>
        </authorList>
    </citation>
    <scope>NUCLEOTIDE SEQUENCE [LARGE SCALE GENOMIC DNA]</scope>
    <source>
        <strain>55989 / EAEC</strain>
    </source>
</reference>
<organism>
    <name type="scientific">Escherichia coli (strain 55989 / EAEC)</name>
    <dbReference type="NCBI Taxonomy" id="585055"/>
    <lineage>
        <taxon>Bacteria</taxon>
        <taxon>Pseudomonadati</taxon>
        <taxon>Pseudomonadota</taxon>
        <taxon>Gammaproteobacteria</taxon>
        <taxon>Enterobacterales</taxon>
        <taxon>Enterobacteriaceae</taxon>
        <taxon>Escherichia</taxon>
    </lineage>
</organism>
<evidence type="ECO:0000255" key="1">
    <source>
        <dbReference type="HAMAP-Rule" id="MF_01535"/>
    </source>
</evidence>
<gene>
    <name evidence="1" type="primary">rhaB</name>
    <name type="ordered locus">EC55989_4382</name>
</gene>
<comment type="function">
    <text evidence="1">Involved in the catabolism of L-rhamnose (6-deoxy-L-mannose). Catalyzes the transfer of the gamma-phosphate group from ATP to the 1-hydroxyl group of L-rhamnulose to yield L-rhamnulose 1-phosphate.</text>
</comment>
<comment type="catalytic activity">
    <reaction evidence="1">
        <text>L-rhamnulose + ATP = L-rhamnulose 1-phosphate + ADP + H(+)</text>
        <dbReference type="Rhea" id="RHEA:20117"/>
        <dbReference type="ChEBI" id="CHEBI:15378"/>
        <dbReference type="ChEBI" id="CHEBI:17897"/>
        <dbReference type="ChEBI" id="CHEBI:30616"/>
        <dbReference type="ChEBI" id="CHEBI:58313"/>
        <dbReference type="ChEBI" id="CHEBI:456216"/>
        <dbReference type="EC" id="2.7.1.5"/>
    </reaction>
</comment>
<comment type="cofactor">
    <cofactor evidence="1">
        <name>Mg(2+)</name>
        <dbReference type="ChEBI" id="CHEBI:18420"/>
    </cofactor>
</comment>
<comment type="pathway">
    <text evidence="1">Carbohydrate degradation; L-rhamnose degradation; glycerone phosphate from L-rhamnose: step 2/3.</text>
</comment>
<comment type="subunit">
    <text evidence="1">Monomer.</text>
</comment>
<comment type="similarity">
    <text evidence="1">Belongs to the rhamnulokinase family.</text>
</comment>
<feature type="chain" id="PRO_1000185182" description="Rhamnulokinase">
    <location>
        <begin position="1"/>
        <end position="489"/>
    </location>
</feature>
<feature type="active site" description="Proton acceptor" evidence="1">
    <location>
        <position position="237"/>
    </location>
</feature>
<feature type="binding site" evidence="1">
    <location>
        <begin position="13"/>
        <end position="17"/>
    </location>
    <ligand>
        <name>ATP</name>
        <dbReference type="ChEBI" id="CHEBI:30616"/>
    </ligand>
</feature>
<feature type="binding site" evidence="1">
    <location>
        <position position="83"/>
    </location>
    <ligand>
        <name>substrate</name>
    </ligand>
</feature>
<feature type="binding site" evidence="1">
    <location>
        <begin position="236"/>
        <end position="238"/>
    </location>
    <ligand>
        <name>substrate</name>
    </ligand>
</feature>
<feature type="binding site" evidence="1">
    <location>
        <position position="259"/>
    </location>
    <ligand>
        <name>ATP</name>
        <dbReference type="ChEBI" id="CHEBI:30616"/>
    </ligand>
</feature>
<feature type="binding site" evidence="1">
    <location>
        <position position="296"/>
    </location>
    <ligand>
        <name>substrate</name>
    </ligand>
</feature>
<feature type="binding site" evidence="1">
    <location>
        <position position="304"/>
    </location>
    <ligand>
        <name>ATP</name>
        <dbReference type="ChEBI" id="CHEBI:30616"/>
    </ligand>
</feature>
<feature type="binding site" evidence="1">
    <location>
        <position position="402"/>
    </location>
    <ligand>
        <name>ATP</name>
        <dbReference type="ChEBI" id="CHEBI:30616"/>
    </ligand>
</feature>
<feature type="disulfide bond" evidence="1">
    <location>
        <begin position="68"/>
        <end position="222"/>
    </location>
</feature>
<feature type="disulfide bond" evidence="1">
    <location>
        <begin position="353"/>
        <end position="370"/>
    </location>
</feature>
<feature type="disulfide bond" evidence="1">
    <location>
        <begin position="413"/>
        <end position="417"/>
    </location>
</feature>